<gene>
    <name type="primary">FAM217B</name>
    <name type="synonym">C20orf177</name>
</gene>
<feature type="chain" id="PRO_0000079485" description="Protein FAM217B">
    <location>
        <begin position="1"/>
        <end position="383"/>
    </location>
</feature>
<feature type="region of interest" description="Disordered" evidence="1">
    <location>
        <begin position="1"/>
        <end position="70"/>
    </location>
</feature>
<feature type="region of interest" description="Disordered" evidence="1">
    <location>
        <begin position="89"/>
        <end position="115"/>
    </location>
</feature>
<feature type="region of interest" description="Disordered" evidence="1">
    <location>
        <begin position="200"/>
        <end position="222"/>
    </location>
</feature>
<feature type="region of interest" description="Disordered" evidence="1">
    <location>
        <begin position="232"/>
        <end position="251"/>
    </location>
</feature>
<feature type="region of interest" description="Disordered" evidence="1">
    <location>
        <begin position="284"/>
        <end position="325"/>
    </location>
</feature>
<feature type="region of interest" description="Disordered" evidence="1">
    <location>
        <begin position="338"/>
        <end position="383"/>
    </location>
</feature>
<feature type="compositionally biased region" description="Polar residues" evidence="1">
    <location>
        <begin position="8"/>
        <end position="43"/>
    </location>
</feature>
<feature type="compositionally biased region" description="Basic and acidic residues" evidence="1">
    <location>
        <begin position="44"/>
        <end position="56"/>
    </location>
</feature>
<feature type="compositionally biased region" description="Polar residues" evidence="1">
    <location>
        <begin position="374"/>
        <end position="383"/>
    </location>
</feature>
<feature type="sequence variant" id="VAR_035691" description="In a breast cancer sample; somatic mutation; dbSNP:rs1180582304." evidence="2">
    <original>S</original>
    <variation>G</variation>
    <location>
        <position position="95"/>
    </location>
</feature>
<feature type="sequence variant" id="VAR_050922" description="In dbSNP:rs6027210.">
    <original>Y</original>
    <variation>C</variation>
    <location>
        <position position="380"/>
    </location>
</feature>
<feature type="sequence conflict" description="In Ref. 5." evidence="3" ref="5">
    <original>Q</original>
    <variation>G</variation>
    <location>
        <position position="68"/>
    </location>
</feature>
<feature type="sequence conflict" description="In Ref. 5; CAB70739." evidence="3" ref="5">
    <original>E</original>
    <variation>G</variation>
    <location>
        <position position="120"/>
    </location>
</feature>
<evidence type="ECO:0000256" key="1">
    <source>
        <dbReference type="SAM" id="MobiDB-lite"/>
    </source>
</evidence>
<evidence type="ECO:0000269" key="2">
    <source>
    </source>
</evidence>
<evidence type="ECO:0000305" key="3"/>
<comment type="interaction">
    <interactant intactId="EBI-19153639">
        <id>Q9NTX9</id>
    </interactant>
    <interactant intactId="EBI-8643161">
        <id>Q9NX04</id>
        <label>AIRIM</label>
    </interactant>
    <organismsDiffer>false</organismsDiffer>
    <experiments>3</experiments>
</comment>
<comment type="interaction">
    <interactant intactId="EBI-19153639">
        <id>Q9NTX9</id>
    </interactant>
    <interactant intactId="EBI-11954519">
        <id>Q49AR9</id>
        <label>ANKS1A</label>
    </interactant>
    <organismsDiffer>false</organismsDiffer>
    <experiments>3</experiments>
</comment>
<comment type="interaction">
    <interactant intactId="EBI-19153639">
        <id>Q9NTX9</id>
    </interactant>
    <interactant intactId="EBI-762428">
        <id>Q92688</id>
        <label>ANP32B</label>
    </interactant>
    <organismsDiffer>false</organismsDiffer>
    <experiments>3</experiments>
</comment>
<comment type="interaction">
    <interactant intactId="EBI-19153639">
        <id>Q9NTX9</id>
    </interactant>
    <interactant intactId="EBI-11524452">
        <id>Q8N9N5-2</id>
        <label>BANP</label>
    </interactant>
    <organismsDiffer>false</organismsDiffer>
    <experiments>3</experiments>
</comment>
<comment type="interaction">
    <interactant intactId="EBI-19153639">
        <id>Q9NTX9</id>
    </interactant>
    <interactant intactId="EBI-739879">
        <id>Q53TS8</id>
        <label>C2CD6</label>
    </interactant>
    <organismsDiffer>false</organismsDiffer>
    <experiments>3</experiments>
</comment>
<comment type="interaction">
    <interactant intactId="EBI-19153639">
        <id>Q9NTX9</id>
    </interactant>
    <interactant intactId="EBI-10171570">
        <id>Q68D86</id>
        <label>CCDC102B</label>
    </interactant>
    <organismsDiffer>false</organismsDiffer>
    <experiments>3</experiments>
</comment>
<comment type="interaction">
    <interactant intactId="EBI-19153639">
        <id>Q9NTX9</id>
    </interactant>
    <interactant intactId="EBI-5278764">
        <id>Q96GN5</id>
        <label>CDCA7L</label>
    </interactant>
    <organismsDiffer>false</organismsDiffer>
    <experiments>3</experiments>
</comment>
<comment type="interaction">
    <interactant intactId="EBI-19153639">
        <id>Q9NTX9</id>
    </interactant>
    <interactant intactId="EBI-742102">
        <id>Q8IYI6</id>
        <label>EXOC8</label>
    </interactant>
    <organismsDiffer>false</organismsDiffer>
    <experiments>3</experiments>
</comment>
<comment type="interaction">
    <interactant intactId="EBI-19153639">
        <id>Q9NTX9</id>
    </interactant>
    <interactant intactId="EBI-2549423">
        <id>Q6NT76</id>
        <label>HMBOX1</label>
    </interactant>
    <organismsDiffer>false</organismsDiffer>
    <experiments>3</experiments>
</comment>
<comment type="interaction">
    <interactant intactId="EBI-19153639">
        <id>Q9NTX9</id>
    </interactant>
    <interactant intactId="EBI-739909">
        <id>Q969R5</id>
        <label>L3MBTL2</label>
    </interactant>
    <organismsDiffer>false</organismsDiffer>
    <experiments>3</experiments>
</comment>
<comment type="interaction">
    <interactant intactId="EBI-19153639">
        <id>Q9NTX9</id>
    </interactant>
    <interactant intactId="EBI-77889">
        <id>Q9UI95</id>
        <label>MAD2L2</label>
    </interactant>
    <organismsDiffer>false</organismsDiffer>
    <experiments>3</experiments>
</comment>
<comment type="interaction">
    <interactant intactId="EBI-19153639">
        <id>Q9NTX9</id>
    </interactant>
    <interactant intactId="EBI-6952711">
        <id>Q8WY64</id>
        <label>MYLIP</label>
    </interactant>
    <organismsDiffer>false</organismsDiffer>
    <experiments>3</experiments>
</comment>
<comment type="interaction">
    <interactant intactId="EBI-19153639">
        <id>Q9NTX9</id>
    </interactant>
    <interactant intactId="EBI-359527">
        <id>P62875</id>
        <label>POLR2L</label>
    </interactant>
    <organismsDiffer>false</organismsDiffer>
    <experiments>3</experiments>
</comment>
<comment type="interaction">
    <interactant intactId="EBI-19153639">
        <id>Q9NTX9</id>
    </interactant>
    <interactant intactId="EBI-455078">
        <id>Q969G3</id>
        <label>SMARCE1</label>
    </interactant>
    <organismsDiffer>false</organismsDiffer>
    <experiments>3</experiments>
</comment>
<comment type="interaction">
    <interactant intactId="EBI-19153639">
        <id>Q9NTX9</id>
    </interactant>
    <interactant intactId="EBI-12037215">
        <id>Q5MJ09</id>
        <label>SPANXN3</label>
    </interactant>
    <organismsDiffer>false</organismsDiffer>
    <experiments>3</experiments>
</comment>
<comment type="interaction">
    <interactant intactId="EBI-19153639">
        <id>Q9NTX9</id>
    </interactant>
    <interactant intactId="EBI-3921347">
        <id>P51687</id>
        <label>SUOX</label>
    </interactant>
    <organismsDiffer>false</organismsDiffer>
    <experiments>3</experiments>
</comment>
<comment type="interaction">
    <interactant intactId="EBI-19153639">
        <id>Q9NTX9</id>
    </interactant>
    <interactant intactId="EBI-11955057">
        <id>Q8N8B7-2</id>
        <label>TCEANC</label>
    </interactant>
    <organismsDiffer>false</organismsDiffer>
    <experiments>3</experiments>
</comment>
<comment type="interaction">
    <interactant intactId="EBI-19153639">
        <id>Q9NTX9</id>
    </interactant>
    <interactant intactId="EBI-11741437">
        <id>Q08117-2</id>
        <label>TLE5</label>
    </interactant>
    <organismsDiffer>false</organismsDiffer>
    <experiments>3</experiments>
</comment>
<comment type="interaction">
    <interactant intactId="EBI-19153639">
        <id>Q9NTX9</id>
    </interactant>
    <interactant intactId="EBI-948354">
        <id>Q6DKK2</id>
        <label>TTC19</label>
    </interactant>
    <organismsDiffer>false</organismsDiffer>
    <experiments>3</experiments>
</comment>
<comment type="interaction">
    <interactant intactId="EBI-19153639">
        <id>Q9NTX9</id>
    </interactant>
    <interactant intactId="EBI-711925">
        <id>Q05516</id>
        <label>ZBTB16</label>
    </interactant>
    <organismsDiffer>false</organismsDiffer>
    <experiments>3</experiments>
</comment>
<comment type="similarity">
    <text evidence="3">Belongs to the FAM217 family.</text>
</comment>
<proteinExistence type="evidence at protein level"/>
<dbReference type="EMBL" id="AK125073">
    <property type="protein sequence ID" value="BAG54133.1"/>
    <property type="molecule type" value="mRNA"/>
</dbReference>
<dbReference type="EMBL" id="AL109928">
    <property type="status" value="NOT_ANNOTATED_CDS"/>
    <property type="molecule type" value="Genomic_DNA"/>
</dbReference>
<dbReference type="EMBL" id="CH471077">
    <property type="protein sequence ID" value="EAW75424.1"/>
    <property type="molecule type" value="Genomic_DNA"/>
</dbReference>
<dbReference type="EMBL" id="BC054002">
    <property type="protein sequence ID" value="AAH54002.1"/>
    <property type="molecule type" value="mRNA"/>
</dbReference>
<dbReference type="EMBL" id="AL137442">
    <property type="protein sequence ID" value="CAB70739.2"/>
    <property type="molecule type" value="mRNA"/>
</dbReference>
<dbReference type="CCDS" id="CCDS13484.1"/>
<dbReference type="PIR" id="T46282">
    <property type="entry name" value="T46282"/>
</dbReference>
<dbReference type="RefSeq" id="NP_001177755.1">
    <property type="nucleotide sequence ID" value="NM_001190826.2"/>
</dbReference>
<dbReference type="RefSeq" id="NP_001177756.1">
    <property type="nucleotide sequence ID" value="NM_001190827.1"/>
</dbReference>
<dbReference type="RefSeq" id="NP_071389.1">
    <property type="nucleotide sequence ID" value="NM_022106.3"/>
</dbReference>
<dbReference type="BioGRID" id="122004">
    <property type="interactions" value="42"/>
</dbReference>
<dbReference type="FunCoup" id="Q9NTX9">
    <property type="interactions" value="1177"/>
</dbReference>
<dbReference type="IntAct" id="Q9NTX9">
    <property type="interactions" value="33"/>
</dbReference>
<dbReference type="STRING" id="9606.ENSP00000351040"/>
<dbReference type="GlyGen" id="Q9NTX9">
    <property type="glycosylation" value="1 site"/>
</dbReference>
<dbReference type="iPTMnet" id="Q9NTX9"/>
<dbReference type="PhosphoSitePlus" id="Q9NTX9"/>
<dbReference type="BioMuta" id="FAM217B"/>
<dbReference type="DMDM" id="27734258"/>
<dbReference type="MassIVE" id="Q9NTX9"/>
<dbReference type="PaxDb" id="9606-ENSP00000351040"/>
<dbReference type="PeptideAtlas" id="Q9NTX9"/>
<dbReference type="ProteomicsDB" id="82644"/>
<dbReference type="Antibodypedia" id="48191">
    <property type="antibodies" value="27 antibodies from 7 providers"/>
</dbReference>
<dbReference type="DNASU" id="63939"/>
<dbReference type="Ensembl" id="ENST00000358293.7">
    <property type="protein sequence ID" value="ENSP00000351040.3"/>
    <property type="gene ID" value="ENSG00000196227.11"/>
</dbReference>
<dbReference type="Ensembl" id="ENST00000360816.8">
    <property type="protein sequence ID" value="ENSP00000354056.3"/>
    <property type="gene ID" value="ENSG00000196227.11"/>
</dbReference>
<dbReference type="GeneID" id="63939"/>
<dbReference type="KEGG" id="hsa:63939"/>
<dbReference type="MANE-Select" id="ENST00000360816.8">
    <property type="protein sequence ID" value="ENSP00000354056.3"/>
    <property type="RefSeq nucleotide sequence ID" value="NM_022106.3"/>
    <property type="RefSeq protein sequence ID" value="NP_071389.1"/>
</dbReference>
<dbReference type="UCSC" id="uc002yba.4">
    <property type="organism name" value="human"/>
</dbReference>
<dbReference type="AGR" id="HGNC:16170"/>
<dbReference type="CTD" id="63939"/>
<dbReference type="DisGeNET" id="63939"/>
<dbReference type="GeneCards" id="FAM217B"/>
<dbReference type="HGNC" id="HGNC:16170">
    <property type="gene designation" value="FAM217B"/>
</dbReference>
<dbReference type="HPA" id="ENSG00000196227">
    <property type="expression patterns" value="Low tissue specificity"/>
</dbReference>
<dbReference type="neXtProt" id="NX_Q9NTX9"/>
<dbReference type="OpenTargets" id="ENSG00000196227"/>
<dbReference type="PharmGKB" id="PA25720"/>
<dbReference type="VEuPathDB" id="HostDB:ENSG00000196227"/>
<dbReference type="eggNOG" id="ENOG502R40C">
    <property type="taxonomic scope" value="Eukaryota"/>
</dbReference>
<dbReference type="GeneTree" id="ENSGT00940000154543"/>
<dbReference type="HOGENOM" id="CLU_043958_0_0_1"/>
<dbReference type="InParanoid" id="Q9NTX9"/>
<dbReference type="OMA" id="RPSYYAF"/>
<dbReference type="OrthoDB" id="10027339at2759"/>
<dbReference type="PAN-GO" id="Q9NTX9">
    <property type="GO annotations" value="0 GO annotations based on evolutionary models"/>
</dbReference>
<dbReference type="PhylomeDB" id="Q9NTX9"/>
<dbReference type="TreeFam" id="TF337855"/>
<dbReference type="PathwayCommons" id="Q9NTX9"/>
<dbReference type="SignaLink" id="Q9NTX9"/>
<dbReference type="BioGRID-ORCS" id="63939">
    <property type="hits" value="10 hits in 1157 CRISPR screens"/>
</dbReference>
<dbReference type="ChiTaRS" id="FAM217B">
    <property type="organism name" value="human"/>
</dbReference>
<dbReference type="GenomeRNAi" id="63939"/>
<dbReference type="Pharos" id="Q9NTX9">
    <property type="development level" value="Tdark"/>
</dbReference>
<dbReference type="PRO" id="PR:Q9NTX9"/>
<dbReference type="Proteomes" id="UP000005640">
    <property type="component" value="Chromosome 20"/>
</dbReference>
<dbReference type="RNAct" id="Q9NTX9">
    <property type="molecule type" value="protein"/>
</dbReference>
<dbReference type="Bgee" id="ENSG00000196227">
    <property type="expression patterns" value="Expressed in endothelial cell and 187 other cell types or tissues"/>
</dbReference>
<dbReference type="ExpressionAtlas" id="Q9NTX9">
    <property type="expression patterns" value="baseline and differential"/>
</dbReference>
<dbReference type="GO" id="GO:0005829">
    <property type="term" value="C:cytosol"/>
    <property type="evidence" value="ECO:0000314"/>
    <property type="project" value="HPA"/>
</dbReference>
<dbReference type="GO" id="GO:0005654">
    <property type="term" value="C:nucleoplasm"/>
    <property type="evidence" value="ECO:0000314"/>
    <property type="project" value="HPA"/>
</dbReference>
<dbReference type="InterPro" id="IPR029266">
    <property type="entry name" value="FAM217"/>
</dbReference>
<dbReference type="PANTHER" id="PTHR22145:SF3">
    <property type="entry name" value="PROTEIN FAM217B"/>
    <property type="match status" value="1"/>
</dbReference>
<dbReference type="PANTHER" id="PTHR22145">
    <property type="entry name" value="SI:CH211-266K22.6"/>
    <property type="match status" value="1"/>
</dbReference>
<dbReference type="Pfam" id="PF15344">
    <property type="entry name" value="FAM217"/>
    <property type="match status" value="1"/>
</dbReference>
<protein>
    <recommendedName>
        <fullName>Protein FAM217B</fullName>
    </recommendedName>
</protein>
<organism>
    <name type="scientific">Homo sapiens</name>
    <name type="common">Human</name>
    <dbReference type="NCBI Taxonomy" id="9606"/>
    <lineage>
        <taxon>Eukaryota</taxon>
        <taxon>Metazoa</taxon>
        <taxon>Chordata</taxon>
        <taxon>Craniata</taxon>
        <taxon>Vertebrata</taxon>
        <taxon>Euteleostomi</taxon>
        <taxon>Mammalia</taxon>
        <taxon>Eutheria</taxon>
        <taxon>Euarchontoglires</taxon>
        <taxon>Primates</taxon>
        <taxon>Haplorrhini</taxon>
        <taxon>Catarrhini</taxon>
        <taxon>Hominidae</taxon>
        <taxon>Homo</taxon>
    </lineage>
</organism>
<accession>Q9NTX9</accession>
<accession>B3KWH1</accession>
<accession>Q9NTA3</accession>
<name>F217B_HUMAN</name>
<sequence length="383" mass="42052">MNAGPSWNKVQHSKNSSGKRQSKSQVPHASSQPRSSLTAVTQPTEEKLKESISPEARRKRNPLGSRCQGASGNKLFLDFQSMKIIKENADEDSASDLSDSERIPIPPSPLTPPDLNLRAEEIDPVYFDLHPGQGHTKPEYYYPNFLPSPFSSWDLRDMALLLNAENKTEAVPRVGGLLGKYIDRLIQLEWLQVQTVQCEKAKGGKARPPTAPGTSGALKSPGRSKLIASALSKPLPHQEGASKSGPSRKKAFHHEEIHPSHYAFETSPRPIDVLGGTRFCSQRQTLEMRTEEKKKKSSKSTKLQRWDLSGSGSSSKVETSGHIRVPKQAAVILDSADSCKASKTQAHAHPRKKGKAESCGHATVSSEKKLKTNGVKQNTYKLK</sequence>
<reference key="1">
    <citation type="journal article" date="2004" name="Nat. Genet.">
        <title>Complete sequencing and characterization of 21,243 full-length human cDNAs.</title>
        <authorList>
            <person name="Ota T."/>
            <person name="Suzuki Y."/>
            <person name="Nishikawa T."/>
            <person name="Otsuki T."/>
            <person name="Sugiyama T."/>
            <person name="Irie R."/>
            <person name="Wakamatsu A."/>
            <person name="Hayashi K."/>
            <person name="Sato H."/>
            <person name="Nagai K."/>
            <person name="Kimura K."/>
            <person name="Makita H."/>
            <person name="Sekine M."/>
            <person name="Obayashi M."/>
            <person name="Nishi T."/>
            <person name="Shibahara T."/>
            <person name="Tanaka T."/>
            <person name="Ishii S."/>
            <person name="Yamamoto J."/>
            <person name="Saito K."/>
            <person name="Kawai Y."/>
            <person name="Isono Y."/>
            <person name="Nakamura Y."/>
            <person name="Nagahari K."/>
            <person name="Murakami K."/>
            <person name="Yasuda T."/>
            <person name="Iwayanagi T."/>
            <person name="Wagatsuma M."/>
            <person name="Shiratori A."/>
            <person name="Sudo H."/>
            <person name="Hosoiri T."/>
            <person name="Kaku Y."/>
            <person name="Kodaira H."/>
            <person name="Kondo H."/>
            <person name="Sugawara M."/>
            <person name="Takahashi M."/>
            <person name="Kanda K."/>
            <person name="Yokoi T."/>
            <person name="Furuya T."/>
            <person name="Kikkawa E."/>
            <person name="Omura Y."/>
            <person name="Abe K."/>
            <person name="Kamihara K."/>
            <person name="Katsuta N."/>
            <person name="Sato K."/>
            <person name="Tanikawa M."/>
            <person name="Yamazaki M."/>
            <person name="Ninomiya K."/>
            <person name="Ishibashi T."/>
            <person name="Yamashita H."/>
            <person name="Murakawa K."/>
            <person name="Fujimori K."/>
            <person name="Tanai H."/>
            <person name="Kimata M."/>
            <person name="Watanabe M."/>
            <person name="Hiraoka S."/>
            <person name="Chiba Y."/>
            <person name="Ishida S."/>
            <person name="Ono Y."/>
            <person name="Takiguchi S."/>
            <person name="Watanabe S."/>
            <person name="Yosida M."/>
            <person name="Hotuta T."/>
            <person name="Kusano J."/>
            <person name="Kanehori K."/>
            <person name="Takahashi-Fujii A."/>
            <person name="Hara H."/>
            <person name="Tanase T.-O."/>
            <person name="Nomura Y."/>
            <person name="Togiya S."/>
            <person name="Komai F."/>
            <person name="Hara R."/>
            <person name="Takeuchi K."/>
            <person name="Arita M."/>
            <person name="Imose N."/>
            <person name="Musashino K."/>
            <person name="Yuuki H."/>
            <person name="Oshima A."/>
            <person name="Sasaki N."/>
            <person name="Aotsuka S."/>
            <person name="Yoshikawa Y."/>
            <person name="Matsunawa H."/>
            <person name="Ichihara T."/>
            <person name="Shiohata N."/>
            <person name="Sano S."/>
            <person name="Moriya S."/>
            <person name="Momiyama H."/>
            <person name="Satoh N."/>
            <person name="Takami S."/>
            <person name="Terashima Y."/>
            <person name="Suzuki O."/>
            <person name="Nakagawa S."/>
            <person name="Senoh A."/>
            <person name="Mizoguchi H."/>
            <person name="Goto Y."/>
            <person name="Shimizu F."/>
            <person name="Wakebe H."/>
            <person name="Hishigaki H."/>
            <person name="Watanabe T."/>
            <person name="Sugiyama A."/>
            <person name="Takemoto M."/>
            <person name="Kawakami B."/>
            <person name="Yamazaki M."/>
            <person name="Watanabe K."/>
            <person name="Kumagai A."/>
            <person name="Itakura S."/>
            <person name="Fukuzumi Y."/>
            <person name="Fujimori Y."/>
            <person name="Komiyama M."/>
            <person name="Tashiro H."/>
            <person name="Tanigami A."/>
            <person name="Fujiwara T."/>
            <person name="Ono T."/>
            <person name="Yamada K."/>
            <person name="Fujii Y."/>
            <person name="Ozaki K."/>
            <person name="Hirao M."/>
            <person name="Ohmori Y."/>
            <person name="Kawabata A."/>
            <person name="Hikiji T."/>
            <person name="Kobatake N."/>
            <person name="Inagaki H."/>
            <person name="Ikema Y."/>
            <person name="Okamoto S."/>
            <person name="Okitani R."/>
            <person name="Kawakami T."/>
            <person name="Noguchi S."/>
            <person name="Itoh T."/>
            <person name="Shigeta K."/>
            <person name="Senba T."/>
            <person name="Matsumura K."/>
            <person name="Nakajima Y."/>
            <person name="Mizuno T."/>
            <person name="Morinaga M."/>
            <person name="Sasaki M."/>
            <person name="Togashi T."/>
            <person name="Oyama M."/>
            <person name="Hata H."/>
            <person name="Watanabe M."/>
            <person name="Komatsu T."/>
            <person name="Mizushima-Sugano J."/>
            <person name="Satoh T."/>
            <person name="Shirai Y."/>
            <person name="Takahashi Y."/>
            <person name="Nakagawa K."/>
            <person name="Okumura K."/>
            <person name="Nagase T."/>
            <person name="Nomura N."/>
            <person name="Kikuchi H."/>
            <person name="Masuho Y."/>
            <person name="Yamashita R."/>
            <person name="Nakai K."/>
            <person name="Yada T."/>
            <person name="Nakamura Y."/>
            <person name="Ohara O."/>
            <person name="Isogai T."/>
            <person name="Sugano S."/>
        </authorList>
    </citation>
    <scope>NUCLEOTIDE SEQUENCE [LARGE SCALE MRNA]</scope>
    <source>
        <tissue>Thalamus</tissue>
    </source>
</reference>
<reference key="2">
    <citation type="journal article" date="2001" name="Nature">
        <title>The DNA sequence and comparative analysis of human chromosome 20.</title>
        <authorList>
            <person name="Deloukas P."/>
            <person name="Matthews L.H."/>
            <person name="Ashurst J.L."/>
            <person name="Burton J."/>
            <person name="Gilbert J.G.R."/>
            <person name="Jones M."/>
            <person name="Stavrides G."/>
            <person name="Almeida J.P."/>
            <person name="Babbage A.K."/>
            <person name="Bagguley C.L."/>
            <person name="Bailey J."/>
            <person name="Barlow K.F."/>
            <person name="Bates K.N."/>
            <person name="Beard L.M."/>
            <person name="Beare D.M."/>
            <person name="Beasley O.P."/>
            <person name="Bird C.P."/>
            <person name="Blakey S.E."/>
            <person name="Bridgeman A.M."/>
            <person name="Brown A.J."/>
            <person name="Buck D."/>
            <person name="Burrill W.D."/>
            <person name="Butler A.P."/>
            <person name="Carder C."/>
            <person name="Carter N.P."/>
            <person name="Chapman J.C."/>
            <person name="Clamp M."/>
            <person name="Clark G."/>
            <person name="Clark L.N."/>
            <person name="Clark S.Y."/>
            <person name="Clee C.M."/>
            <person name="Clegg S."/>
            <person name="Cobley V.E."/>
            <person name="Collier R.E."/>
            <person name="Connor R.E."/>
            <person name="Corby N.R."/>
            <person name="Coulson A."/>
            <person name="Coville G.J."/>
            <person name="Deadman R."/>
            <person name="Dhami P.D."/>
            <person name="Dunn M."/>
            <person name="Ellington A.G."/>
            <person name="Frankland J.A."/>
            <person name="Fraser A."/>
            <person name="French L."/>
            <person name="Garner P."/>
            <person name="Grafham D.V."/>
            <person name="Griffiths C."/>
            <person name="Griffiths M.N.D."/>
            <person name="Gwilliam R."/>
            <person name="Hall R.E."/>
            <person name="Hammond S."/>
            <person name="Harley J.L."/>
            <person name="Heath P.D."/>
            <person name="Ho S."/>
            <person name="Holden J.L."/>
            <person name="Howden P.J."/>
            <person name="Huckle E."/>
            <person name="Hunt A.R."/>
            <person name="Hunt S.E."/>
            <person name="Jekosch K."/>
            <person name="Johnson C.M."/>
            <person name="Johnson D."/>
            <person name="Kay M.P."/>
            <person name="Kimberley A.M."/>
            <person name="King A."/>
            <person name="Knights A."/>
            <person name="Laird G.K."/>
            <person name="Lawlor S."/>
            <person name="Lehvaeslaiho M.H."/>
            <person name="Leversha M.A."/>
            <person name="Lloyd C."/>
            <person name="Lloyd D.M."/>
            <person name="Lovell J.D."/>
            <person name="Marsh V.L."/>
            <person name="Martin S.L."/>
            <person name="McConnachie L.J."/>
            <person name="McLay K."/>
            <person name="McMurray A.A."/>
            <person name="Milne S.A."/>
            <person name="Mistry D."/>
            <person name="Moore M.J.F."/>
            <person name="Mullikin J.C."/>
            <person name="Nickerson T."/>
            <person name="Oliver K."/>
            <person name="Parker A."/>
            <person name="Patel R."/>
            <person name="Pearce T.A.V."/>
            <person name="Peck A.I."/>
            <person name="Phillimore B.J.C.T."/>
            <person name="Prathalingam S.R."/>
            <person name="Plumb R.W."/>
            <person name="Ramsay H."/>
            <person name="Rice C.M."/>
            <person name="Ross M.T."/>
            <person name="Scott C.E."/>
            <person name="Sehra H.K."/>
            <person name="Shownkeen R."/>
            <person name="Sims S."/>
            <person name="Skuce C.D."/>
            <person name="Smith M.L."/>
            <person name="Soderlund C."/>
            <person name="Steward C.A."/>
            <person name="Sulston J.E."/>
            <person name="Swann R.M."/>
            <person name="Sycamore N."/>
            <person name="Taylor R."/>
            <person name="Tee L."/>
            <person name="Thomas D.W."/>
            <person name="Thorpe A."/>
            <person name="Tracey A."/>
            <person name="Tromans A.C."/>
            <person name="Vaudin M."/>
            <person name="Wall M."/>
            <person name="Wallis J.M."/>
            <person name="Whitehead S.L."/>
            <person name="Whittaker P."/>
            <person name="Willey D.L."/>
            <person name="Williams L."/>
            <person name="Williams S.A."/>
            <person name="Wilming L."/>
            <person name="Wray P.W."/>
            <person name="Hubbard T."/>
            <person name="Durbin R.M."/>
            <person name="Bentley D.R."/>
            <person name="Beck S."/>
            <person name="Rogers J."/>
        </authorList>
    </citation>
    <scope>NUCLEOTIDE SEQUENCE [LARGE SCALE GENOMIC DNA]</scope>
</reference>
<reference key="3">
    <citation type="submission" date="2005-09" db="EMBL/GenBank/DDBJ databases">
        <authorList>
            <person name="Mural R.J."/>
            <person name="Istrail S."/>
            <person name="Sutton G.G."/>
            <person name="Florea L."/>
            <person name="Halpern A.L."/>
            <person name="Mobarry C.M."/>
            <person name="Lippert R."/>
            <person name="Walenz B."/>
            <person name="Shatkay H."/>
            <person name="Dew I."/>
            <person name="Miller J.R."/>
            <person name="Flanigan M.J."/>
            <person name="Edwards N.J."/>
            <person name="Bolanos R."/>
            <person name="Fasulo D."/>
            <person name="Halldorsson B.V."/>
            <person name="Hannenhalli S."/>
            <person name="Turner R."/>
            <person name="Yooseph S."/>
            <person name="Lu F."/>
            <person name="Nusskern D.R."/>
            <person name="Shue B.C."/>
            <person name="Zheng X.H."/>
            <person name="Zhong F."/>
            <person name="Delcher A.L."/>
            <person name="Huson D.H."/>
            <person name="Kravitz S.A."/>
            <person name="Mouchard L."/>
            <person name="Reinert K."/>
            <person name="Remington K.A."/>
            <person name="Clark A.G."/>
            <person name="Waterman M.S."/>
            <person name="Eichler E.E."/>
            <person name="Adams M.D."/>
            <person name="Hunkapiller M.W."/>
            <person name="Myers E.W."/>
            <person name="Venter J.C."/>
        </authorList>
    </citation>
    <scope>NUCLEOTIDE SEQUENCE [LARGE SCALE GENOMIC DNA]</scope>
</reference>
<reference key="4">
    <citation type="journal article" date="2004" name="Genome Res.">
        <title>The status, quality, and expansion of the NIH full-length cDNA project: the Mammalian Gene Collection (MGC).</title>
        <authorList>
            <consortium name="The MGC Project Team"/>
        </authorList>
    </citation>
    <scope>NUCLEOTIDE SEQUENCE [LARGE SCALE MRNA]</scope>
    <source>
        <tissue>Testis</tissue>
    </source>
</reference>
<reference key="5">
    <citation type="journal article" date="2007" name="BMC Genomics">
        <title>The full-ORF clone resource of the German cDNA consortium.</title>
        <authorList>
            <person name="Bechtel S."/>
            <person name="Rosenfelder H."/>
            <person name="Duda A."/>
            <person name="Schmidt C.P."/>
            <person name="Ernst U."/>
            <person name="Wellenreuther R."/>
            <person name="Mehrle A."/>
            <person name="Schuster C."/>
            <person name="Bahr A."/>
            <person name="Bloecker H."/>
            <person name="Heubner D."/>
            <person name="Hoerlein A."/>
            <person name="Michel G."/>
            <person name="Wedler H."/>
            <person name="Koehrer K."/>
            <person name="Ottenwaelder B."/>
            <person name="Poustka A."/>
            <person name="Wiemann S."/>
            <person name="Schupp I."/>
        </authorList>
    </citation>
    <scope>NUCLEOTIDE SEQUENCE [LARGE SCALE MRNA] OF 68-383</scope>
    <source>
        <tissue>Kidney</tissue>
    </source>
</reference>
<reference key="6">
    <citation type="journal article" date="2006" name="Science">
        <title>The consensus coding sequences of human breast and colorectal cancers.</title>
        <authorList>
            <person name="Sjoeblom T."/>
            <person name="Jones S."/>
            <person name="Wood L.D."/>
            <person name="Parsons D.W."/>
            <person name="Lin J."/>
            <person name="Barber T.D."/>
            <person name="Mandelker D."/>
            <person name="Leary R.J."/>
            <person name="Ptak J."/>
            <person name="Silliman N."/>
            <person name="Szabo S."/>
            <person name="Buckhaults P."/>
            <person name="Farrell C."/>
            <person name="Meeh P."/>
            <person name="Markowitz S.D."/>
            <person name="Willis J."/>
            <person name="Dawson D."/>
            <person name="Willson J.K.V."/>
            <person name="Gazdar A.F."/>
            <person name="Hartigan J."/>
            <person name="Wu L."/>
            <person name="Liu C."/>
            <person name="Parmigiani G."/>
            <person name="Park B.H."/>
            <person name="Bachman K.E."/>
            <person name="Papadopoulos N."/>
            <person name="Vogelstein B."/>
            <person name="Kinzler K.W."/>
            <person name="Velculescu V.E."/>
        </authorList>
    </citation>
    <scope>VARIANT [LARGE SCALE ANALYSIS] GLY-95</scope>
</reference>
<keyword id="KW-1267">Proteomics identification</keyword>
<keyword id="KW-1185">Reference proteome</keyword>